<protein>
    <recommendedName>
        <fullName evidence="9">Transcription factor 21</fullName>
        <shortName>TCF-21</shortName>
    </recommendedName>
    <alternativeName>
        <fullName evidence="6">Capsulin</fullName>
    </alternativeName>
    <alternativeName>
        <fullName evidence="6">Epicardin</fullName>
    </alternativeName>
    <alternativeName>
        <fullName evidence="5">Podocyte-expressed 1</fullName>
        <shortName evidence="5">Pod 1</shortName>
        <shortName evidence="5">Pod-1</shortName>
    </alternativeName>
</protein>
<gene>
    <name type="primary">tcf21</name>
    <name evidence="5" type="synonym">pod1</name>
</gene>
<name>TCF21_XENLA</name>
<organism>
    <name type="scientific">Xenopus laevis</name>
    <name type="common">African clawed frog</name>
    <dbReference type="NCBI Taxonomy" id="8355"/>
    <lineage>
        <taxon>Eukaryota</taxon>
        <taxon>Metazoa</taxon>
        <taxon>Chordata</taxon>
        <taxon>Craniata</taxon>
        <taxon>Vertebrata</taxon>
        <taxon>Euteleostomi</taxon>
        <taxon>Amphibia</taxon>
        <taxon>Batrachia</taxon>
        <taxon>Anura</taxon>
        <taxon>Pipoidea</taxon>
        <taxon>Pipidae</taxon>
        <taxon>Xenopodinae</taxon>
        <taxon>Xenopus</taxon>
        <taxon>Xenopus</taxon>
    </lineage>
</organism>
<accession>Q6GNB7</accession>
<sequence length="179" mass="19789">MSTGSLSDVEDFQDMEMLECDGIKLDPNKEFGISNDSNEESSTCDNGSPKKGRGTSGKRRKASSKKSPLGTINQEGKQVQRNAANARERARMRVLSKAFSRLKTTLPWVPPDTKLSKLDTLRLASSYIAHLRQILANDKYENGYIHPVNLTWPFMVAGKPENDLKEVVSTSRLCGPTAS</sequence>
<reference evidence="9" key="1">
    <citation type="submission" date="2004-06" db="EMBL/GenBank/DDBJ databases">
        <title>Essential function of the basic helix-loop-helix transcription factor Tcf21 (capsulin/epicardin/Pod1) for Xenopus pronephric kidney organogenesis.</title>
        <authorList>
            <person name="Eid S.R."/>
            <person name="Braendli A.W."/>
        </authorList>
    </citation>
    <scope>NUCLEOTIDE SEQUENCE [MRNA]</scope>
    <source>
        <tissue evidence="9">Kidney</tissue>
    </source>
</reference>
<reference evidence="9" key="2">
    <citation type="submission" date="2004-06" db="EMBL/GenBank/DDBJ databases">
        <authorList>
            <consortium name="NIH - Xenopus Gene Collection (XGC) project"/>
        </authorList>
    </citation>
    <scope>NUCLEOTIDE SEQUENCE [LARGE SCALE MRNA]</scope>
    <source>
        <tissue evidence="8">Spleen</tissue>
    </source>
</reference>
<reference evidence="7" key="3">
    <citation type="journal article" date="2005" name="Int. J. Dev. Biol.">
        <title>Developmental expression of Pod 1 in Xenopus laevis.</title>
        <authorList>
            <person name="Simrick S."/>
            <person name="Masse K."/>
            <person name="Jones E.A."/>
        </authorList>
    </citation>
    <scope>TISSUE SPECIFICITY</scope>
    <scope>DEVELOPMENTAL STAGE</scope>
</reference>
<keyword id="KW-0221">Differentiation</keyword>
<keyword id="KW-0238">DNA-binding</keyword>
<keyword id="KW-0539">Nucleus</keyword>
<keyword id="KW-1185">Reference proteome</keyword>
<keyword id="KW-0804">Transcription</keyword>
<keyword id="KW-0805">Transcription regulation</keyword>
<evidence type="ECO:0000250" key="1">
    <source>
        <dbReference type="UniProtKB" id="O43680"/>
    </source>
</evidence>
<evidence type="ECO:0000255" key="2">
    <source>
        <dbReference type="PROSITE-ProRule" id="PRU00981"/>
    </source>
</evidence>
<evidence type="ECO:0000256" key="3">
    <source>
        <dbReference type="SAM" id="MobiDB-lite"/>
    </source>
</evidence>
<evidence type="ECO:0000269" key="4">
    <source>
    </source>
</evidence>
<evidence type="ECO:0000303" key="5">
    <source>
    </source>
</evidence>
<evidence type="ECO:0000303" key="6">
    <source ref="1"/>
</evidence>
<evidence type="ECO:0000305" key="7"/>
<evidence type="ECO:0000312" key="8">
    <source>
        <dbReference type="EMBL" id="AAH73597.1"/>
    </source>
</evidence>
<evidence type="ECO:0000312" key="9">
    <source>
        <dbReference type="EMBL" id="AAT74527.1"/>
    </source>
</evidence>
<feature type="chain" id="PRO_0000386431" description="Transcription factor 21">
    <location>
        <begin position="1"/>
        <end position="179"/>
    </location>
</feature>
<feature type="domain" description="bHLH" evidence="2">
    <location>
        <begin position="79"/>
        <end position="131"/>
    </location>
</feature>
<feature type="region of interest" description="Disordered" evidence="3">
    <location>
        <begin position="20"/>
        <end position="86"/>
    </location>
</feature>
<feature type="compositionally biased region" description="Polar residues" evidence="3">
    <location>
        <begin position="34"/>
        <end position="46"/>
    </location>
</feature>
<feature type="compositionally biased region" description="Basic residues" evidence="3">
    <location>
        <begin position="50"/>
        <end position="64"/>
    </location>
</feature>
<feature type="compositionally biased region" description="Polar residues" evidence="3">
    <location>
        <begin position="70"/>
        <end position="80"/>
    </location>
</feature>
<dbReference type="EMBL" id="AY660871">
    <property type="protein sequence ID" value="AAT74527.1"/>
    <property type="molecule type" value="mRNA"/>
</dbReference>
<dbReference type="EMBL" id="BC073597">
    <property type="protein sequence ID" value="AAH73597.1"/>
    <property type="molecule type" value="mRNA"/>
</dbReference>
<dbReference type="RefSeq" id="NP_001085957.1">
    <property type="nucleotide sequence ID" value="NM_001092488.1"/>
</dbReference>
<dbReference type="SMR" id="Q6GNB7"/>
<dbReference type="DNASU" id="444386"/>
<dbReference type="GeneID" id="444386"/>
<dbReference type="KEGG" id="xla:444386"/>
<dbReference type="AGR" id="Xenbase:XB-GENE-484809"/>
<dbReference type="CTD" id="444386"/>
<dbReference type="Xenbase" id="XB-GENE-484809">
    <property type="gene designation" value="tcf21.L"/>
</dbReference>
<dbReference type="OMA" id="CEGACAN"/>
<dbReference type="OrthoDB" id="6233288at2759"/>
<dbReference type="Proteomes" id="UP000186698">
    <property type="component" value="Chromosome 5L"/>
</dbReference>
<dbReference type="Bgee" id="444386">
    <property type="expression patterns" value="Expressed in spleen and 10 other cell types or tissues"/>
</dbReference>
<dbReference type="GO" id="GO:0005634">
    <property type="term" value="C:nucleus"/>
    <property type="evidence" value="ECO:0000250"/>
    <property type="project" value="UniProtKB"/>
</dbReference>
<dbReference type="GO" id="GO:0001228">
    <property type="term" value="F:DNA-binding transcription activator activity, RNA polymerase II-specific"/>
    <property type="evidence" value="ECO:0000250"/>
    <property type="project" value="UniProtKB"/>
</dbReference>
<dbReference type="GO" id="GO:0000981">
    <property type="term" value="F:DNA-binding transcription factor activity, RNA polymerase II-specific"/>
    <property type="evidence" value="ECO:0000318"/>
    <property type="project" value="GO_Central"/>
</dbReference>
<dbReference type="GO" id="GO:0001227">
    <property type="term" value="F:DNA-binding transcription repressor activity, RNA polymerase II-specific"/>
    <property type="evidence" value="ECO:0000250"/>
    <property type="project" value="UniProtKB"/>
</dbReference>
<dbReference type="GO" id="GO:0070888">
    <property type="term" value="F:E-box binding"/>
    <property type="evidence" value="ECO:0000250"/>
    <property type="project" value="UniProtKB"/>
</dbReference>
<dbReference type="GO" id="GO:0046983">
    <property type="term" value="F:protein dimerization activity"/>
    <property type="evidence" value="ECO:0000250"/>
    <property type="project" value="UniProtKB"/>
</dbReference>
<dbReference type="GO" id="GO:0000977">
    <property type="term" value="F:RNA polymerase II transcription regulatory region sequence-specific DNA binding"/>
    <property type="evidence" value="ECO:0000318"/>
    <property type="project" value="GO_Central"/>
</dbReference>
<dbReference type="GO" id="GO:0001658">
    <property type="term" value="P:branching involved in ureteric bud morphogenesis"/>
    <property type="evidence" value="ECO:0000250"/>
    <property type="project" value="UniProtKB"/>
</dbReference>
<dbReference type="GO" id="GO:0014707">
    <property type="term" value="P:branchiomeric skeletal muscle development"/>
    <property type="evidence" value="ECO:0000250"/>
    <property type="project" value="UniProtKB"/>
</dbReference>
<dbReference type="GO" id="GO:0060435">
    <property type="term" value="P:bronchiole development"/>
    <property type="evidence" value="ECO:0000250"/>
    <property type="project" value="UniProtKB"/>
</dbReference>
<dbReference type="GO" id="GO:0032502">
    <property type="term" value="P:developmental process"/>
    <property type="evidence" value="ECO:0000318"/>
    <property type="project" value="GO_Central"/>
</dbReference>
<dbReference type="GO" id="GO:0060539">
    <property type="term" value="P:diaphragm development"/>
    <property type="evidence" value="ECO:0000250"/>
    <property type="project" value="UniProtKB"/>
</dbReference>
<dbReference type="GO" id="GO:0048557">
    <property type="term" value="P:embryonic digestive tract morphogenesis"/>
    <property type="evidence" value="ECO:0000250"/>
    <property type="project" value="UniProtKB"/>
</dbReference>
<dbReference type="GO" id="GO:0030855">
    <property type="term" value="P:epithelial cell differentiation"/>
    <property type="evidence" value="ECO:0000250"/>
    <property type="project" value="UniProtKB"/>
</dbReference>
<dbReference type="GO" id="GO:0048732">
    <property type="term" value="P:gland development"/>
    <property type="evidence" value="ECO:0000250"/>
    <property type="project" value="UniProtKB"/>
</dbReference>
<dbReference type="GO" id="GO:0032835">
    <property type="term" value="P:glomerulus development"/>
    <property type="evidence" value="ECO:0000250"/>
    <property type="project" value="UniProtKB"/>
</dbReference>
<dbReference type="GO" id="GO:0072013">
    <property type="term" value="P:glomus development"/>
    <property type="evidence" value="ECO:0000315"/>
    <property type="project" value="UniProtKB"/>
</dbReference>
<dbReference type="GO" id="GO:0001822">
    <property type="term" value="P:kidney development"/>
    <property type="evidence" value="ECO:0000250"/>
    <property type="project" value="UniProtKB"/>
</dbReference>
<dbReference type="GO" id="GO:0048286">
    <property type="term" value="P:lung alveolus development"/>
    <property type="evidence" value="ECO:0000250"/>
    <property type="project" value="UniProtKB"/>
</dbReference>
<dbReference type="GO" id="GO:0060425">
    <property type="term" value="P:lung morphogenesis"/>
    <property type="evidence" value="ECO:0000250"/>
    <property type="project" value="UniProtKB"/>
</dbReference>
<dbReference type="GO" id="GO:0060426">
    <property type="term" value="P:lung vasculature development"/>
    <property type="evidence" value="ECO:0000250"/>
    <property type="project" value="UniProtKB"/>
</dbReference>
<dbReference type="GO" id="GO:0072277">
    <property type="term" value="P:metanephric glomerular capillary formation"/>
    <property type="evidence" value="ECO:0000250"/>
    <property type="project" value="UniProtKB"/>
</dbReference>
<dbReference type="GO" id="GO:0072162">
    <property type="term" value="P:metanephric mesenchymal cell differentiation"/>
    <property type="evidence" value="ECO:0000250"/>
    <property type="project" value="UniProtKB"/>
</dbReference>
<dbReference type="GO" id="GO:0001763">
    <property type="term" value="P:morphogenesis of a branching structure"/>
    <property type="evidence" value="ECO:0000250"/>
    <property type="project" value="UniProtKB"/>
</dbReference>
<dbReference type="GO" id="GO:0060766">
    <property type="term" value="P:negative regulation of androgen receptor signaling pathway"/>
    <property type="evidence" value="ECO:0000250"/>
    <property type="project" value="UniProtKB"/>
</dbReference>
<dbReference type="GO" id="GO:0000122">
    <property type="term" value="P:negative regulation of transcription by RNA polymerase II"/>
    <property type="evidence" value="ECO:0000250"/>
    <property type="project" value="UniProtKB"/>
</dbReference>
<dbReference type="GO" id="GO:0045944">
    <property type="term" value="P:positive regulation of transcription by RNA polymerase II"/>
    <property type="evidence" value="ECO:0000250"/>
    <property type="project" value="UniProtKB"/>
</dbReference>
<dbReference type="GO" id="GO:0006357">
    <property type="term" value="P:regulation of transcription by RNA polymerase II"/>
    <property type="evidence" value="ECO:0000318"/>
    <property type="project" value="GO_Central"/>
</dbReference>
<dbReference type="GO" id="GO:0048608">
    <property type="term" value="P:reproductive structure development"/>
    <property type="evidence" value="ECO:0000250"/>
    <property type="project" value="UniProtKB"/>
</dbReference>
<dbReference type="GO" id="GO:0060541">
    <property type="term" value="P:respiratory system development"/>
    <property type="evidence" value="ECO:0000250"/>
    <property type="project" value="UniProtKB"/>
</dbReference>
<dbReference type="GO" id="GO:0060021">
    <property type="term" value="P:roof of mouth development"/>
    <property type="evidence" value="ECO:0000250"/>
    <property type="project" value="UniProtKB"/>
</dbReference>
<dbReference type="GO" id="GO:0060008">
    <property type="term" value="P:Sertoli cell differentiation"/>
    <property type="evidence" value="ECO:0000250"/>
    <property type="project" value="UniProtKB"/>
</dbReference>
<dbReference type="GO" id="GO:0007530">
    <property type="term" value="P:sex determination"/>
    <property type="evidence" value="ECO:0000250"/>
    <property type="project" value="UniProtKB"/>
</dbReference>
<dbReference type="GO" id="GO:0048536">
    <property type="term" value="P:spleen development"/>
    <property type="evidence" value="ECO:0000250"/>
    <property type="project" value="UniProtKB"/>
</dbReference>
<dbReference type="GO" id="GO:0001657">
    <property type="term" value="P:ureteric bud development"/>
    <property type="evidence" value="ECO:0000250"/>
    <property type="project" value="UniProtKB"/>
</dbReference>
<dbReference type="GO" id="GO:0001944">
    <property type="term" value="P:vasculature development"/>
    <property type="evidence" value="ECO:0000250"/>
    <property type="project" value="UniProtKB"/>
</dbReference>
<dbReference type="CDD" id="cd19704">
    <property type="entry name" value="bHLH_TS_TCF21_capsulin"/>
    <property type="match status" value="1"/>
</dbReference>
<dbReference type="FunFam" id="4.10.280.10:FF:000010">
    <property type="entry name" value="Scleraxis bHLH transcription factor"/>
    <property type="match status" value="1"/>
</dbReference>
<dbReference type="Gene3D" id="4.10.280.10">
    <property type="entry name" value="Helix-loop-helix DNA-binding domain"/>
    <property type="match status" value="1"/>
</dbReference>
<dbReference type="InterPro" id="IPR011598">
    <property type="entry name" value="bHLH_dom"/>
</dbReference>
<dbReference type="InterPro" id="IPR050283">
    <property type="entry name" value="E-box_TF_Regulators"/>
</dbReference>
<dbReference type="InterPro" id="IPR036638">
    <property type="entry name" value="HLH_DNA-bd_sf"/>
</dbReference>
<dbReference type="PANTHER" id="PTHR23349">
    <property type="entry name" value="BASIC HELIX-LOOP-HELIX TRANSCRIPTION FACTOR, TWIST"/>
    <property type="match status" value="1"/>
</dbReference>
<dbReference type="PANTHER" id="PTHR23349:SF67">
    <property type="entry name" value="TRANSCRIPTION FACTOR 21"/>
    <property type="match status" value="1"/>
</dbReference>
<dbReference type="Pfam" id="PF00010">
    <property type="entry name" value="HLH"/>
    <property type="match status" value="1"/>
</dbReference>
<dbReference type="SMART" id="SM00353">
    <property type="entry name" value="HLH"/>
    <property type="match status" value="1"/>
</dbReference>
<dbReference type="SUPFAM" id="SSF47459">
    <property type="entry name" value="HLH, helix-loop-helix DNA-binding domain"/>
    <property type="match status" value="1"/>
</dbReference>
<dbReference type="PROSITE" id="PS50888">
    <property type="entry name" value="BHLH"/>
    <property type="match status" value="1"/>
</dbReference>
<comment type="function">
    <text evidence="1">Involved in epithelial-mesenchymal interactions in kidney and lung morphogenesis that include epithelial differentiation and branching morphogenesis.</text>
</comment>
<comment type="subunit">
    <text evidence="1">Efficient DNA binding requires dimerization with another bHLH protein.</text>
</comment>
<comment type="subcellular location">
    <subcellularLocation>
        <location evidence="1 2">Nucleus</location>
    </subcellularLocation>
</comment>
<comment type="tissue specificity">
    <text evidence="4">At the start of neurulation (stage 13), expressed in the pronephros. At tailbud stage (stage 25-28), expression is high in the anterior-most branchial arch and pronephric glomus. At stage 40, staining persists in the glomus and in the epicardium region of the heart, and at stage 42, expression is higher in the glomus than in the kidney tubule or duct. In adults, expression is highest in the rectum and the spleen, with significant expression in the duodenum, heart, kidney, lungs, pancreas, skin, liver and muscle.</text>
</comment>
<comment type="developmental stage">
    <text evidence="4">Expression begins at the start of neurulation (stage 13), followed by a gradual increase in expression from stages 16.5 to 26.5, after which expression levels are maintained through to stage 35.</text>
</comment>
<proteinExistence type="evidence at transcript level"/>